<reference key="1">
    <citation type="journal article" date="2002" name="J. Biol. Chem.">
        <title>A novel WD repeat protein component of the methylosome binds Sm proteins.</title>
        <authorList>
            <person name="Friesen W.J."/>
            <person name="Wyce A."/>
            <person name="Paushkin S."/>
            <person name="Abel L."/>
            <person name="Rappsilber J."/>
            <person name="Mann M."/>
            <person name="Dreyfuss G."/>
        </authorList>
    </citation>
    <scope>NUCLEOTIDE SEQUENCE [MRNA] (ISOFORM 1)</scope>
    <scope>PROTEIN SEQUENCE OF 4-15; 38-52; 122-145; 151-164 AND 192-198</scope>
    <scope>FUNCTION</scope>
    <scope>INTERACTION WITH PRMT5; SNRPB; SNRPD2; SNRPD3 AND SNRPE</scope>
    <scope>IDENTIFICATION BY MASS SPECTROMETRY</scope>
</reference>
<reference key="2">
    <citation type="journal article" date="2003" name="Mol. Cell. Biol.">
        <title>Purification and identification of a novel complex which is involved in androgen receptor-dependent transcription.</title>
        <authorList>
            <person name="Hosohata K."/>
            <person name="Li P."/>
            <person name="Hosohata Y."/>
            <person name="Qin J."/>
            <person name="Roeder R.G."/>
            <person name="Wang Z."/>
        </authorList>
    </citation>
    <scope>NUCLEOTIDE SEQUENCE [MRNA] (ISOFORM 1)</scope>
    <scope>PROTEIN SEQUENCE OF 3-15</scope>
    <scope>TISSUE SPECIFICITY</scope>
    <scope>INTERACTION WITH AR AND NKX3-1</scope>
</reference>
<reference key="3">
    <citation type="journal article" date="2004" name="Nat. Genet.">
        <title>Complete sequencing and characterization of 21,243 full-length human cDNAs.</title>
        <authorList>
            <person name="Ota T."/>
            <person name="Suzuki Y."/>
            <person name="Nishikawa T."/>
            <person name="Otsuki T."/>
            <person name="Sugiyama T."/>
            <person name="Irie R."/>
            <person name="Wakamatsu A."/>
            <person name="Hayashi K."/>
            <person name="Sato H."/>
            <person name="Nagai K."/>
            <person name="Kimura K."/>
            <person name="Makita H."/>
            <person name="Sekine M."/>
            <person name="Obayashi M."/>
            <person name="Nishi T."/>
            <person name="Shibahara T."/>
            <person name="Tanaka T."/>
            <person name="Ishii S."/>
            <person name="Yamamoto J."/>
            <person name="Saito K."/>
            <person name="Kawai Y."/>
            <person name="Isono Y."/>
            <person name="Nakamura Y."/>
            <person name="Nagahari K."/>
            <person name="Murakami K."/>
            <person name="Yasuda T."/>
            <person name="Iwayanagi T."/>
            <person name="Wagatsuma M."/>
            <person name="Shiratori A."/>
            <person name="Sudo H."/>
            <person name="Hosoiri T."/>
            <person name="Kaku Y."/>
            <person name="Kodaira H."/>
            <person name="Kondo H."/>
            <person name="Sugawara M."/>
            <person name="Takahashi M."/>
            <person name="Kanda K."/>
            <person name="Yokoi T."/>
            <person name="Furuya T."/>
            <person name="Kikkawa E."/>
            <person name="Omura Y."/>
            <person name="Abe K."/>
            <person name="Kamihara K."/>
            <person name="Katsuta N."/>
            <person name="Sato K."/>
            <person name="Tanikawa M."/>
            <person name="Yamazaki M."/>
            <person name="Ninomiya K."/>
            <person name="Ishibashi T."/>
            <person name="Yamashita H."/>
            <person name="Murakawa K."/>
            <person name="Fujimori K."/>
            <person name="Tanai H."/>
            <person name="Kimata M."/>
            <person name="Watanabe M."/>
            <person name="Hiraoka S."/>
            <person name="Chiba Y."/>
            <person name="Ishida S."/>
            <person name="Ono Y."/>
            <person name="Takiguchi S."/>
            <person name="Watanabe S."/>
            <person name="Yosida M."/>
            <person name="Hotuta T."/>
            <person name="Kusano J."/>
            <person name="Kanehori K."/>
            <person name="Takahashi-Fujii A."/>
            <person name="Hara H."/>
            <person name="Tanase T.-O."/>
            <person name="Nomura Y."/>
            <person name="Togiya S."/>
            <person name="Komai F."/>
            <person name="Hara R."/>
            <person name="Takeuchi K."/>
            <person name="Arita M."/>
            <person name="Imose N."/>
            <person name="Musashino K."/>
            <person name="Yuuki H."/>
            <person name="Oshima A."/>
            <person name="Sasaki N."/>
            <person name="Aotsuka S."/>
            <person name="Yoshikawa Y."/>
            <person name="Matsunawa H."/>
            <person name="Ichihara T."/>
            <person name="Shiohata N."/>
            <person name="Sano S."/>
            <person name="Moriya S."/>
            <person name="Momiyama H."/>
            <person name="Satoh N."/>
            <person name="Takami S."/>
            <person name="Terashima Y."/>
            <person name="Suzuki O."/>
            <person name="Nakagawa S."/>
            <person name="Senoh A."/>
            <person name="Mizoguchi H."/>
            <person name="Goto Y."/>
            <person name="Shimizu F."/>
            <person name="Wakebe H."/>
            <person name="Hishigaki H."/>
            <person name="Watanabe T."/>
            <person name="Sugiyama A."/>
            <person name="Takemoto M."/>
            <person name="Kawakami B."/>
            <person name="Yamazaki M."/>
            <person name="Watanabe K."/>
            <person name="Kumagai A."/>
            <person name="Itakura S."/>
            <person name="Fukuzumi Y."/>
            <person name="Fujimori Y."/>
            <person name="Komiyama M."/>
            <person name="Tashiro H."/>
            <person name="Tanigami A."/>
            <person name="Fujiwara T."/>
            <person name="Ono T."/>
            <person name="Yamada K."/>
            <person name="Fujii Y."/>
            <person name="Ozaki K."/>
            <person name="Hirao M."/>
            <person name="Ohmori Y."/>
            <person name="Kawabata A."/>
            <person name="Hikiji T."/>
            <person name="Kobatake N."/>
            <person name="Inagaki H."/>
            <person name="Ikema Y."/>
            <person name="Okamoto S."/>
            <person name="Okitani R."/>
            <person name="Kawakami T."/>
            <person name="Noguchi S."/>
            <person name="Itoh T."/>
            <person name="Shigeta K."/>
            <person name="Senba T."/>
            <person name="Matsumura K."/>
            <person name="Nakajima Y."/>
            <person name="Mizuno T."/>
            <person name="Morinaga M."/>
            <person name="Sasaki M."/>
            <person name="Togashi T."/>
            <person name="Oyama M."/>
            <person name="Hata H."/>
            <person name="Watanabe M."/>
            <person name="Komatsu T."/>
            <person name="Mizushima-Sugano J."/>
            <person name="Satoh T."/>
            <person name="Shirai Y."/>
            <person name="Takahashi Y."/>
            <person name="Nakagawa K."/>
            <person name="Okumura K."/>
            <person name="Nagase T."/>
            <person name="Nomura N."/>
            <person name="Kikuchi H."/>
            <person name="Masuho Y."/>
            <person name="Yamashita R."/>
            <person name="Nakai K."/>
            <person name="Yada T."/>
            <person name="Nakamura Y."/>
            <person name="Ohara O."/>
            <person name="Isogai T."/>
            <person name="Sugano S."/>
        </authorList>
    </citation>
    <scope>NUCLEOTIDE SEQUENCE [LARGE SCALE MRNA] (ISOFORMS 1 AND 2)</scope>
    <source>
        <tissue>Kidney proximal tubule</tissue>
    </source>
</reference>
<reference key="4">
    <citation type="journal article" date="2004" name="Oncogene">
        <title>Expression profiling and differential screening between hepatoblastomas and the corresponding normal livers: identification of high expression of the PLK1 oncogene as a poor-prognostic indicator of hepatoblastomas.</title>
        <authorList>
            <person name="Yamada S."/>
            <person name="Ohira M."/>
            <person name="Horie H."/>
            <person name="Ando K."/>
            <person name="Takayasu H."/>
            <person name="Suzuki Y."/>
            <person name="Sugano S."/>
            <person name="Hirata T."/>
            <person name="Goto T."/>
            <person name="Matsunaga T."/>
            <person name="Hiyama E."/>
            <person name="Hayashi Y."/>
            <person name="Ando H."/>
            <person name="Suita S."/>
            <person name="Kaneko M."/>
            <person name="Sasaki F."/>
            <person name="Hashizume K."/>
            <person name="Ohnuma N."/>
            <person name="Nakagawara A."/>
        </authorList>
    </citation>
    <scope>NUCLEOTIDE SEQUENCE [LARGE SCALE MRNA] (ISOFORM 1)</scope>
    <source>
        <tissue>Hepatoblastoma</tissue>
    </source>
</reference>
<reference key="5">
    <citation type="journal article" date="2006" name="Nature">
        <title>The DNA sequence and biological annotation of human chromosome 1.</title>
        <authorList>
            <person name="Gregory S.G."/>
            <person name="Barlow K.F."/>
            <person name="McLay K.E."/>
            <person name="Kaul R."/>
            <person name="Swarbreck D."/>
            <person name="Dunham A."/>
            <person name="Scott C.E."/>
            <person name="Howe K.L."/>
            <person name="Woodfine K."/>
            <person name="Spencer C.C.A."/>
            <person name="Jones M.C."/>
            <person name="Gillson C."/>
            <person name="Searle S."/>
            <person name="Zhou Y."/>
            <person name="Kokocinski F."/>
            <person name="McDonald L."/>
            <person name="Evans R."/>
            <person name="Phillips K."/>
            <person name="Atkinson A."/>
            <person name="Cooper R."/>
            <person name="Jones C."/>
            <person name="Hall R.E."/>
            <person name="Andrews T.D."/>
            <person name="Lloyd C."/>
            <person name="Ainscough R."/>
            <person name="Almeida J.P."/>
            <person name="Ambrose K.D."/>
            <person name="Anderson F."/>
            <person name="Andrew R.W."/>
            <person name="Ashwell R.I.S."/>
            <person name="Aubin K."/>
            <person name="Babbage A.K."/>
            <person name="Bagguley C.L."/>
            <person name="Bailey J."/>
            <person name="Beasley H."/>
            <person name="Bethel G."/>
            <person name="Bird C.P."/>
            <person name="Bray-Allen S."/>
            <person name="Brown J.Y."/>
            <person name="Brown A.J."/>
            <person name="Buckley D."/>
            <person name="Burton J."/>
            <person name="Bye J."/>
            <person name="Carder C."/>
            <person name="Chapman J.C."/>
            <person name="Clark S.Y."/>
            <person name="Clarke G."/>
            <person name="Clee C."/>
            <person name="Cobley V."/>
            <person name="Collier R.E."/>
            <person name="Corby N."/>
            <person name="Coville G.J."/>
            <person name="Davies J."/>
            <person name="Deadman R."/>
            <person name="Dunn M."/>
            <person name="Earthrowl M."/>
            <person name="Ellington A.G."/>
            <person name="Errington H."/>
            <person name="Frankish A."/>
            <person name="Frankland J."/>
            <person name="French L."/>
            <person name="Garner P."/>
            <person name="Garnett J."/>
            <person name="Gay L."/>
            <person name="Ghori M.R.J."/>
            <person name="Gibson R."/>
            <person name="Gilby L.M."/>
            <person name="Gillett W."/>
            <person name="Glithero R.J."/>
            <person name="Grafham D.V."/>
            <person name="Griffiths C."/>
            <person name="Griffiths-Jones S."/>
            <person name="Grocock R."/>
            <person name="Hammond S."/>
            <person name="Harrison E.S.I."/>
            <person name="Hart E."/>
            <person name="Haugen E."/>
            <person name="Heath P.D."/>
            <person name="Holmes S."/>
            <person name="Holt K."/>
            <person name="Howden P.J."/>
            <person name="Hunt A.R."/>
            <person name="Hunt S.E."/>
            <person name="Hunter G."/>
            <person name="Isherwood J."/>
            <person name="James R."/>
            <person name="Johnson C."/>
            <person name="Johnson D."/>
            <person name="Joy A."/>
            <person name="Kay M."/>
            <person name="Kershaw J.K."/>
            <person name="Kibukawa M."/>
            <person name="Kimberley A.M."/>
            <person name="King A."/>
            <person name="Knights A.J."/>
            <person name="Lad H."/>
            <person name="Laird G."/>
            <person name="Lawlor S."/>
            <person name="Leongamornlert D.A."/>
            <person name="Lloyd D.M."/>
            <person name="Loveland J."/>
            <person name="Lovell J."/>
            <person name="Lush M.J."/>
            <person name="Lyne R."/>
            <person name="Martin S."/>
            <person name="Mashreghi-Mohammadi M."/>
            <person name="Matthews L."/>
            <person name="Matthews N.S.W."/>
            <person name="McLaren S."/>
            <person name="Milne S."/>
            <person name="Mistry S."/>
            <person name="Moore M.J.F."/>
            <person name="Nickerson T."/>
            <person name="O'Dell C.N."/>
            <person name="Oliver K."/>
            <person name="Palmeiri A."/>
            <person name="Palmer S.A."/>
            <person name="Parker A."/>
            <person name="Patel D."/>
            <person name="Pearce A.V."/>
            <person name="Peck A.I."/>
            <person name="Pelan S."/>
            <person name="Phelps K."/>
            <person name="Phillimore B.J."/>
            <person name="Plumb R."/>
            <person name="Rajan J."/>
            <person name="Raymond C."/>
            <person name="Rouse G."/>
            <person name="Saenphimmachak C."/>
            <person name="Sehra H.K."/>
            <person name="Sheridan E."/>
            <person name="Shownkeen R."/>
            <person name="Sims S."/>
            <person name="Skuce C.D."/>
            <person name="Smith M."/>
            <person name="Steward C."/>
            <person name="Subramanian S."/>
            <person name="Sycamore N."/>
            <person name="Tracey A."/>
            <person name="Tromans A."/>
            <person name="Van Helmond Z."/>
            <person name="Wall M."/>
            <person name="Wallis J.M."/>
            <person name="White S."/>
            <person name="Whitehead S.L."/>
            <person name="Wilkinson J.E."/>
            <person name="Willey D.L."/>
            <person name="Williams H."/>
            <person name="Wilming L."/>
            <person name="Wray P.W."/>
            <person name="Wu Z."/>
            <person name="Coulson A."/>
            <person name="Vaudin M."/>
            <person name="Sulston J.E."/>
            <person name="Durbin R.M."/>
            <person name="Hubbard T."/>
            <person name="Wooster R."/>
            <person name="Dunham I."/>
            <person name="Carter N.P."/>
            <person name="McVean G."/>
            <person name="Ross M.T."/>
            <person name="Harrow J."/>
            <person name="Olson M.V."/>
            <person name="Beck S."/>
            <person name="Rogers J."/>
            <person name="Bentley D.R."/>
        </authorList>
    </citation>
    <scope>NUCLEOTIDE SEQUENCE [LARGE SCALE GENOMIC DNA]</scope>
</reference>
<reference key="6">
    <citation type="submission" date="2005-07" db="EMBL/GenBank/DDBJ databases">
        <authorList>
            <person name="Mural R.J."/>
            <person name="Istrail S."/>
            <person name="Sutton G.G."/>
            <person name="Florea L."/>
            <person name="Halpern A.L."/>
            <person name="Mobarry C.M."/>
            <person name="Lippert R."/>
            <person name="Walenz B."/>
            <person name="Shatkay H."/>
            <person name="Dew I."/>
            <person name="Miller J.R."/>
            <person name="Flanigan M.J."/>
            <person name="Edwards N.J."/>
            <person name="Bolanos R."/>
            <person name="Fasulo D."/>
            <person name="Halldorsson B.V."/>
            <person name="Hannenhalli S."/>
            <person name="Turner R."/>
            <person name="Yooseph S."/>
            <person name="Lu F."/>
            <person name="Nusskern D.R."/>
            <person name="Shue B.C."/>
            <person name="Zheng X.H."/>
            <person name="Zhong F."/>
            <person name="Delcher A.L."/>
            <person name="Huson D.H."/>
            <person name="Kravitz S.A."/>
            <person name="Mouchard L."/>
            <person name="Reinert K."/>
            <person name="Remington K.A."/>
            <person name="Clark A.G."/>
            <person name="Waterman M.S."/>
            <person name="Eichler E.E."/>
            <person name="Adams M.D."/>
            <person name="Hunkapiller M.W."/>
            <person name="Myers E.W."/>
            <person name="Venter J.C."/>
        </authorList>
    </citation>
    <scope>NUCLEOTIDE SEQUENCE [LARGE SCALE GENOMIC DNA]</scope>
</reference>
<reference key="7">
    <citation type="journal article" date="2004" name="Genome Res.">
        <title>The status, quality, and expansion of the NIH full-length cDNA project: the Mammalian Gene Collection (MGC).</title>
        <authorList>
            <consortium name="The MGC Project Team"/>
        </authorList>
    </citation>
    <scope>NUCLEOTIDE SEQUENCE [LARGE SCALE MRNA] (ISOFORM 1)</scope>
    <source>
        <tissue>Colon</tissue>
        <tissue>Lung</tissue>
        <tissue>Skin</tissue>
    </source>
</reference>
<reference key="8">
    <citation type="submission" date="2008-12" db="UniProtKB">
        <authorList>
            <person name="Bienvenut W.V."/>
            <person name="Zebisch A."/>
            <person name="Kolch W."/>
        </authorList>
    </citation>
    <scope>PROTEIN SEQUENCE OF 3-15; 36-52; 122-145; 151-179 AND 192-198</scope>
    <scope>PHOSPHORYLATION AT THR-5</scope>
    <scope>IDENTIFICATION BY MASS SPECTROMETRY</scope>
    <source>
        <tissue>Colon carcinoma</tissue>
    </source>
</reference>
<reference key="9">
    <citation type="journal article" date="2003" name="Cancer Lett.">
        <title>Neuroblastoma oligo-capping cDNA project: toward the understanding of the genesis and biology of neuroblastoma.</title>
        <authorList>
            <person name="Ohira M."/>
            <person name="Morohashi A."/>
            <person name="Nakamura Y."/>
            <person name="Isogai E."/>
            <person name="Furuya K."/>
            <person name="Hamano S."/>
            <person name="Machida T."/>
            <person name="Aoyama M."/>
            <person name="Fukumura M."/>
            <person name="Miyazaki K."/>
            <person name="Suzuki Y."/>
            <person name="Sugano S."/>
            <person name="Hirato J."/>
            <person name="Nakagawara A."/>
        </authorList>
    </citation>
    <scope>NUCLEOTIDE SEQUENCE [LARGE SCALE MRNA] OF 184-342 (ISOFORM 1)</scope>
    <source>
        <tissue>Neuroblastoma</tissue>
    </source>
</reference>
<reference key="10">
    <citation type="journal article" date="2003" name="Nucleic Acids Res.">
        <title>The FCP1 phosphatase interacts with RNA polymerase II and with MEP50 a component of the methylosome complex involved in the assembly of snRNP.</title>
        <authorList>
            <person name="Licciardo P."/>
            <person name="Amente S."/>
            <person name="Ruggiero L."/>
            <person name="Monti M."/>
            <person name="Pucci P."/>
            <person name="Lania L."/>
            <person name="Majello B."/>
        </authorList>
    </citation>
    <scope>SUBCELLULAR LOCATION</scope>
    <scope>INTERACTION WITH CTDP1</scope>
</reference>
<reference key="11">
    <citation type="journal article" date="2005" name="J. Biol. Chem.">
        <title>Toward an assembly line for U7 snRNPs: interactions of U7-specific Lsm proteins with PRMT5 and SMN complexes.</title>
        <authorList>
            <person name="Azzouz T.N."/>
            <person name="Pillai R.S."/>
            <person name="Dapp C."/>
            <person name="Chari A."/>
            <person name="Meister G."/>
            <person name="Kambach C."/>
            <person name="Fischer U."/>
            <person name="Schuemperli D."/>
        </authorList>
    </citation>
    <scope>INTERACTION WITH LSM11</scope>
</reference>
<reference key="12">
    <citation type="journal article" date="2006" name="Biochem. Biophys. Res. Commun.">
        <title>Association of Polycomb group SUZ12 with WD-repeat protein MEP50 that binds to histone H2A selectively in vitro.</title>
        <authorList>
            <person name="Furuno K."/>
            <person name="Masatsugu T."/>
            <person name="Sonoda M."/>
            <person name="Sasazuki T."/>
            <person name="Yamamoto K."/>
        </authorList>
    </citation>
    <scope>SUBCELLULAR LOCATION</scope>
    <scope>INTERACTION WITH H2AC20; PRMT5 AND SUZ12</scope>
</reference>
<reference key="13">
    <citation type="journal article" date="2007" name="J. Urol.">
        <title>The expression and function of androgen receptor coactivator p44 and protein arginine methyltransferase 5 in the developing testis and testicular tumors.</title>
        <authorList>
            <person name="Liang J.J."/>
            <person name="Wang Z."/>
            <person name="Chiriboga L."/>
            <person name="Greco M.A."/>
            <person name="Shapiro E."/>
            <person name="Huang H."/>
            <person name="Yang X.J."/>
            <person name="Huang J."/>
            <person name="Peng Y."/>
            <person name="Melamed J."/>
            <person name="Garabedian M.J."/>
            <person name="Lee P."/>
        </authorList>
    </citation>
    <scope>SUBCELLULAR LOCATION</scope>
    <scope>TISSUE SPECIFICITY</scope>
    <scope>DEVELOPMENTAL STAGE</scope>
</reference>
<reference key="14">
    <citation type="journal article" date="2008" name="Cell">
        <title>An assembly chaperone collaborates with the SMN complex to generate spliceosomal SnRNPs.</title>
        <authorList>
            <person name="Chari A."/>
            <person name="Golas M.M."/>
            <person name="Klingenhager M."/>
            <person name="Neuenkirchen N."/>
            <person name="Sander B."/>
            <person name="Englbrecht C."/>
            <person name="Sickmann A."/>
            <person name="Stark H."/>
            <person name="Fischer U."/>
        </authorList>
    </citation>
    <scope>IDENTIFICATION IN THE METHYLOSOME COMPLEX</scope>
</reference>
<reference key="15">
    <citation type="journal article" date="2008" name="Proc. Natl. Acad. Sci. U.S.A.">
        <title>A quantitative atlas of mitotic phosphorylation.</title>
        <authorList>
            <person name="Dephoure N."/>
            <person name="Zhou C."/>
            <person name="Villen J."/>
            <person name="Beausoleil S.A."/>
            <person name="Bakalarski C.E."/>
            <person name="Elledge S.J."/>
            <person name="Gygi S.P."/>
        </authorList>
    </citation>
    <scope>IDENTIFICATION BY MASS SPECTROMETRY [LARGE SCALE ANALYSIS]</scope>
    <source>
        <tissue>Cervix carcinoma</tissue>
    </source>
</reference>
<reference key="16">
    <citation type="journal article" date="2009" name="Mol. Cell. Biol.">
        <title>APE1/Ref-1 interacts with NPM1 within nucleoli and plays a role in the rRNA quality control process.</title>
        <authorList>
            <person name="Vascotto C."/>
            <person name="Fantini D."/>
            <person name="Romanello M."/>
            <person name="Cesaratto L."/>
            <person name="Deganuto M."/>
            <person name="Leonardi A."/>
            <person name="Radicella J.P."/>
            <person name="Kelley M.R."/>
            <person name="D'Ambrosio C."/>
            <person name="Scaloni A."/>
            <person name="Quadrifoglio F."/>
            <person name="Tell G."/>
        </authorList>
    </citation>
    <scope>INTERACTION WITH APEX1</scope>
    <scope>IDENTIFICATION BY MASS SPECTROMETRY</scope>
    <scope>SUBCELLULAR LOCATION</scope>
</reference>
<reference key="17">
    <citation type="journal article" date="2009" name="Sci. Signal.">
        <title>Quantitative phosphoproteomic analysis of T cell receptor signaling reveals system-wide modulation of protein-protein interactions.</title>
        <authorList>
            <person name="Mayya V."/>
            <person name="Lundgren D.H."/>
            <person name="Hwang S.-I."/>
            <person name="Rezaul K."/>
            <person name="Wu L."/>
            <person name="Eng J.K."/>
            <person name="Rodionov V."/>
            <person name="Han D.K."/>
        </authorList>
    </citation>
    <scope>PHOSPHORYLATION [LARGE SCALE ANALYSIS] AT THR-5</scope>
    <scope>IDENTIFICATION BY MASS SPECTROMETRY [LARGE SCALE ANALYSIS]</scope>
    <source>
        <tissue>Leukemic T-cell</tissue>
    </source>
</reference>
<reference key="18">
    <citation type="journal article" date="2010" name="Sci. Signal.">
        <title>Quantitative phosphoproteomics reveals widespread full phosphorylation site occupancy during mitosis.</title>
        <authorList>
            <person name="Olsen J.V."/>
            <person name="Vermeulen M."/>
            <person name="Santamaria A."/>
            <person name="Kumar C."/>
            <person name="Miller M.L."/>
            <person name="Jensen L.J."/>
            <person name="Gnad F."/>
            <person name="Cox J."/>
            <person name="Jensen T.S."/>
            <person name="Nigg E.A."/>
            <person name="Brunak S."/>
            <person name="Mann M."/>
        </authorList>
    </citation>
    <scope>PHOSPHORYLATION [LARGE SCALE ANALYSIS] AT THR-5</scope>
    <scope>IDENTIFICATION BY MASS SPECTROMETRY [LARGE SCALE ANALYSIS]</scope>
    <source>
        <tissue>Cervix carcinoma</tissue>
    </source>
</reference>
<reference key="19">
    <citation type="journal article" date="2011" name="BMC Syst. Biol.">
        <title>Initial characterization of the human central proteome.</title>
        <authorList>
            <person name="Burkard T.R."/>
            <person name="Planyavsky M."/>
            <person name="Kaupe I."/>
            <person name="Breitwieser F.P."/>
            <person name="Buerckstuemmer T."/>
            <person name="Bennett K.L."/>
            <person name="Superti-Furga G."/>
            <person name="Colinge J."/>
        </authorList>
    </citation>
    <scope>IDENTIFICATION BY MASS SPECTROMETRY [LARGE SCALE ANALYSIS]</scope>
</reference>
<reference key="20">
    <citation type="journal article" date="2011" name="J. Biol. Chem.">
        <title>RioK1, a new interactor of protein arginine methyltransferase 5 (PRMT5), competes with pICln for binding and modulates PRMT5 complex composition and substrate specificity.</title>
        <authorList>
            <person name="Guderian G."/>
            <person name="Peter C."/>
            <person name="Wiesner J."/>
            <person name="Sickmann A."/>
            <person name="Schulze-Osthoff K."/>
            <person name="Fischer U."/>
            <person name="Grimmler M."/>
        </authorList>
    </citation>
    <scope>SUBUNIT</scope>
    <scope>SUBCELLULAR LOCATION</scope>
    <scope>IDENTIFICATION IN A COMPLEX WITH PRTM5; WDR77; RIOK1 OR CLNS1A</scope>
</reference>
<reference key="21">
    <citation type="journal article" date="2013" name="J. Proteome Res.">
        <title>Toward a comprehensive characterization of a human cancer cell phosphoproteome.</title>
        <authorList>
            <person name="Zhou H."/>
            <person name="Di Palma S."/>
            <person name="Preisinger C."/>
            <person name="Peng M."/>
            <person name="Polat A.N."/>
            <person name="Heck A.J."/>
            <person name="Mohammed S."/>
        </authorList>
    </citation>
    <scope>PHOSPHORYLATION [LARGE SCALE ANALYSIS] AT THR-5</scope>
    <scope>IDENTIFICATION BY MASS SPECTROMETRY [LARGE SCALE ANALYSIS]</scope>
    <source>
        <tissue>Cervix carcinoma</tissue>
        <tissue>Erythroleukemia</tissue>
    </source>
</reference>
<reference key="22">
    <citation type="journal article" date="2014" name="Cell Rep.">
        <title>5-Hydroxymethylcytosine plays a critical role in glioblastomagenesis by recruiting the CHTOP-methylosome complex.</title>
        <authorList>
            <person name="Takai H."/>
            <person name="Masuda K."/>
            <person name="Sato T."/>
            <person name="Sakaguchi Y."/>
            <person name="Suzuki T."/>
            <person name="Suzuki T."/>
            <person name="Koyama-Nasu R."/>
            <person name="Nasu-Nishimura Y."/>
            <person name="Katou Y."/>
            <person name="Ogawa H."/>
            <person name="Morishita Y."/>
            <person name="Kozuka-Hata H."/>
            <person name="Oyama M."/>
            <person name="Todo T."/>
            <person name="Ino Y."/>
            <person name="Mukasa A."/>
            <person name="Saito N."/>
            <person name="Toyoshima C."/>
            <person name="Shirahige K."/>
            <person name="Akiyama T."/>
        </authorList>
    </citation>
    <scope>INTERACTION WITH CHTOP</scope>
    <scope>IDENTIFICATION IN THE METHYLOSOME COMPLEX WITH PRMT1; PRMT5 AND ERH</scope>
</reference>
<reference key="23">
    <citation type="journal article" date="2014" name="J. Proteomics">
        <title>An enzyme assisted RP-RPLC approach for in-depth analysis of human liver phosphoproteome.</title>
        <authorList>
            <person name="Bian Y."/>
            <person name="Song C."/>
            <person name="Cheng K."/>
            <person name="Dong M."/>
            <person name="Wang F."/>
            <person name="Huang J."/>
            <person name="Sun D."/>
            <person name="Wang L."/>
            <person name="Ye M."/>
            <person name="Zou H."/>
        </authorList>
    </citation>
    <scope>PHOSPHORYLATION [LARGE SCALE ANALYSIS] AT THR-5</scope>
    <scope>IDENTIFICATION BY MASS SPECTROMETRY [LARGE SCALE ANALYSIS]</scope>
    <source>
        <tissue>Liver</tissue>
    </source>
</reference>
<reference key="24">
    <citation type="journal article" date="2016" name="Tumor Biol.">
        <title>Yeast two-hybrid screening identified WDR77 as a novel interacting partner of TSC22D2.</title>
        <authorList>
            <person name="Li Q."/>
            <person name="Chen P."/>
            <person name="Zeng Z."/>
            <person name="Liang F."/>
            <person name="Song Y."/>
            <person name="Xiong F."/>
            <person name="Li X."/>
            <person name="Gong Z."/>
            <person name="Zhou M."/>
            <person name="Xiang B."/>
            <person name="Peng C."/>
            <person name="Li X."/>
            <person name="Chen X."/>
            <person name="Li G."/>
            <person name="Xiong W."/>
        </authorList>
    </citation>
    <scope>INTERACTION WITH TSC22D2</scope>
    <scope>SUBCELLULAR LOCATION</scope>
</reference>
<reference key="25">
    <citation type="journal article" date="2021" name="Life. Sci Alliance">
        <title>The uncharacterized protein FAM47E interacts with PRMT5 and regulates its functions.</title>
        <authorList>
            <person name="Chakrapani B."/>
            <person name="Khan M.I.K."/>
            <person name="Kadumuri R.V."/>
            <person name="Gupta S."/>
            <person name="Verma M."/>
            <person name="Awasthi S."/>
            <person name="Govindaraju G."/>
            <person name="Mahesh A."/>
            <person name="Rajavelu A."/>
            <person name="Chavali S."/>
            <person name="Dhayalan A."/>
        </authorList>
    </citation>
    <scope>INTERACTION WITH PRMT5</scope>
</reference>
<reference key="26">
    <citation type="journal article" date="2012" name="Proc. Natl. Acad. Sci. U.S.A.">
        <title>Crystal structure of the human PRMT5:MEP50 complex.</title>
        <authorList>
            <person name="Antonysamy S."/>
            <person name="Bonday Z."/>
            <person name="Campbell R.M."/>
            <person name="Doyle B."/>
            <person name="Druzina Z."/>
            <person name="Gheyi T."/>
            <person name="Han B."/>
            <person name="Jungheim L.N."/>
            <person name="Qian Y."/>
            <person name="Rauch C."/>
            <person name="Russell M."/>
            <person name="Sauder J.M."/>
            <person name="Wasserman S.R."/>
            <person name="Weichert K."/>
            <person name="Willard F.S."/>
            <person name="Zhang A."/>
            <person name="Emtage S."/>
        </authorList>
    </citation>
    <scope>X-RAY CRYSTALLOGRAPHY (2.06 ANGSTROMS) OF 2-342 IN COMPLEX WITH PRMT5</scope>
    <scope>FUNCTION</scope>
    <scope>WD REPEATS</scope>
    <scope>SUBUNIT</scope>
</reference>
<proteinExistence type="evidence at protein level"/>
<organism>
    <name type="scientific">Homo sapiens</name>
    <name type="common">Human</name>
    <dbReference type="NCBI Taxonomy" id="9606"/>
    <lineage>
        <taxon>Eukaryota</taxon>
        <taxon>Metazoa</taxon>
        <taxon>Chordata</taxon>
        <taxon>Craniata</taxon>
        <taxon>Vertebrata</taxon>
        <taxon>Euteleostomi</taxon>
        <taxon>Mammalia</taxon>
        <taxon>Eutheria</taxon>
        <taxon>Euarchontoglires</taxon>
        <taxon>Primates</taxon>
        <taxon>Haplorrhini</taxon>
        <taxon>Catarrhini</taxon>
        <taxon>Hominidae</taxon>
        <taxon>Homo</taxon>
    </lineage>
</organism>
<evidence type="ECO:0000255" key="1">
    <source>
        <dbReference type="PROSITE-ProRule" id="PRU00221"/>
    </source>
</evidence>
<evidence type="ECO:0000269" key="2">
    <source>
    </source>
</evidence>
<evidence type="ECO:0000269" key="3">
    <source>
    </source>
</evidence>
<evidence type="ECO:0000269" key="4">
    <source>
    </source>
</evidence>
<evidence type="ECO:0000269" key="5">
    <source>
    </source>
</evidence>
<evidence type="ECO:0000269" key="6">
    <source>
    </source>
</evidence>
<evidence type="ECO:0000269" key="7">
    <source>
    </source>
</evidence>
<evidence type="ECO:0000269" key="8">
    <source>
    </source>
</evidence>
<evidence type="ECO:0000269" key="9">
    <source>
    </source>
</evidence>
<evidence type="ECO:0000269" key="10">
    <source>
    </source>
</evidence>
<evidence type="ECO:0000269" key="11">
    <source>
    </source>
</evidence>
<evidence type="ECO:0000269" key="12">
    <source>
    </source>
</evidence>
<evidence type="ECO:0000269" key="13">
    <source>
    </source>
</evidence>
<evidence type="ECO:0000269" key="14">
    <source>
    </source>
</evidence>
<evidence type="ECO:0000269" key="15">
    <source ref="8"/>
</evidence>
<evidence type="ECO:0000303" key="16">
    <source>
    </source>
</evidence>
<evidence type="ECO:0000303" key="17">
    <source>
    </source>
</evidence>
<evidence type="ECO:0000303" key="18">
    <source>
    </source>
</evidence>
<evidence type="ECO:0000303" key="19">
    <source>
    </source>
</evidence>
<evidence type="ECO:0000305" key="20"/>
<evidence type="ECO:0000312" key="21">
    <source>
        <dbReference type="HGNC" id="HGNC:29652"/>
    </source>
</evidence>
<evidence type="ECO:0007744" key="22">
    <source>
    </source>
</evidence>
<evidence type="ECO:0007744" key="23">
    <source>
    </source>
</evidence>
<evidence type="ECO:0007744" key="24">
    <source>
    </source>
</evidence>
<evidence type="ECO:0007744" key="25">
    <source>
    </source>
</evidence>
<evidence type="ECO:0007829" key="26">
    <source>
        <dbReference type="PDB" id="6RLL"/>
    </source>
</evidence>
<evidence type="ECO:0007829" key="27">
    <source>
        <dbReference type="PDB" id="6UGH"/>
    </source>
</evidence>
<evidence type="ECO:0007829" key="28">
    <source>
        <dbReference type="PDB" id="6V0O"/>
    </source>
</evidence>
<evidence type="ECO:0007829" key="29">
    <source>
        <dbReference type="PDB" id="6V0P"/>
    </source>
</evidence>
<evidence type="ECO:0007829" key="30">
    <source>
        <dbReference type="PDB" id="7MXN"/>
    </source>
</evidence>
<evidence type="ECO:0007829" key="31">
    <source>
        <dbReference type="PDB" id="7S0U"/>
    </source>
</evidence>
<evidence type="ECO:0007829" key="32">
    <source>
        <dbReference type="PDB" id="7S1P"/>
    </source>
</evidence>
<evidence type="ECO:0007829" key="33">
    <source>
        <dbReference type="PDB" id="7UYF"/>
    </source>
</evidence>
<evidence type="ECO:0007829" key="34">
    <source>
        <dbReference type="PDB" id="8CTB"/>
    </source>
</evidence>
<feature type="chain" id="PRO_0000051074" description="Methylosome protein WDR77">
    <location>
        <begin position="1"/>
        <end position="342"/>
    </location>
</feature>
<feature type="repeat" description="WD 1" evidence="1 11">
    <location>
        <begin position="22"/>
        <end position="75"/>
    </location>
</feature>
<feature type="repeat" description="WD 2" evidence="1 11">
    <location>
        <begin position="78"/>
        <end position="116"/>
    </location>
</feature>
<feature type="repeat" description="WD 3" evidence="1 11">
    <location>
        <begin position="123"/>
        <end position="162"/>
    </location>
</feature>
<feature type="repeat" description="WD 4" evidence="1 11">
    <location>
        <begin position="165"/>
        <end position="205"/>
    </location>
</feature>
<feature type="repeat" description="WD 5" evidence="1 11">
    <location>
        <begin position="209"/>
        <end position="250"/>
    </location>
</feature>
<feature type="repeat" description="WD 6" evidence="1 11">
    <location>
        <begin position="253"/>
        <end position="293"/>
    </location>
</feature>
<feature type="repeat" description="WD 7" evidence="1 11">
    <location>
        <begin position="295"/>
        <end position="330"/>
    </location>
</feature>
<feature type="modified residue" description="Phosphothreonine" evidence="15 22 23 24 25">
    <location>
        <position position="5"/>
    </location>
</feature>
<feature type="splice variant" id="VSP_056166" description="In isoform 2." evidence="17">
    <location>
        <begin position="101"/>
        <end position="164"/>
    </location>
</feature>
<feature type="sequence variant" id="VAR_042903" description="In dbSNP:rs7416672.">
    <original>S</original>
    <variation>I</variation>
    <location>
        <position position="48"/>
    </location>
</feature>
<feature type="sequence conflict" description="In Ref. 2; BAD96909." evidence="20" ref="2">
    <original>S</original>
    <variation>N</variation>
    <location>
        <position position="244"/>
    </location>
</feature>
<feature type="sequence conflict" description="In Ref. 7; AAH09411." evidence="20" ref="7">
    <original>LTTVGWDHQVVHHVVPTEPLPAPGPASVTE</original>
    <variation>DLQVLLSRLDLRQKASPP</variation>
    <location>
        <begin position="313"/>
        <end position="342"/>
    </location>
</feature>
<feature type="strand" evidence="29">
    <location>
        <begin position="29"/>
        <end position="36"/>
    </location>
</feature>
<feature type="strand" evidence="32">
    <location>
        <begin position="38"/>
        <end position="40"/>
    </location>
</feature>
<feature type="strand" evidence="29">
    <location>
        <begin position="42"/>
        <end position="47"/>
    </location>
</feature>
<feature type="strand" evidence="29">
    <location>
        <begin position="50"/>
        <end position="52"/>
    </location>
</feature>
<feature type="strand" evidence="29">
    <location>
        <begin position="56"/>
        <end position="63"/>
    </location>
</feature>
<feature type="helix" evidence="29">
    <location>
        <begin position="64"/>
        <end position="66"/>
    </location>
</feature>
<feature type="helix" evidence="29">
    <location>
        <begin position="70"/>
        <end position="72"/>
    </location>
</feature>
<feature type="strand" evidence="29">
    <location>
        <begin position="74"/>
        <end position="81"/>
    </location>
</feature>
<feature type="strand" evidence="29">
    <location>
        <begin position="83"/>
        <end position="89"/>
    </location>
</feature>
<feature type="turn" evidence="29">
    <location>
        <begin position="90"/>
        <end position="92"/>
    </location>
</feature>
<feature type="strand" evidence="29">
    <location>
        <begin position="93"/>
        <end position="98"/>
    </location>
</feature>
<feature type="strand" evidence="29">
    <location>
        <begin position="101"/>
        <end position="108"/>
    </location>
</feature>
<feature type="strand" evidence="29">
    <location>
        <begin position="110"/>
        <end position="112"/>
    </location>
</feature>
<feature type="strand" evidence="29">
    <location>
        <begin position="115"/>
        <end position="122"/>
    </location>
</feature>
<feature type="strand" evidence="26">
    <location>
        <begin position="124"/>
        <end position="126"/>
    </location>
</feature>
<feature type="strand" evidence="29">
    <location>
        <begin position="128"/>
        <end position="133"/>
    </location>
</feature>
<feature type="strand" evidence="29">
    <location>
        <begin position="137"/>
        <end position="144"/>
    </location>
</feature>
<feature type="strand" evidence="27">
    <location>
        <begin position="145"/>
        <end position="147"/>
    </location>
</feature>
<feature type="strand" evidence="29">
    <location>
        <begin position="149"/>
        <end position="153"/>
    </location>
</feature>
<feature type="turn" evidence="29">
    <location>
        <begin position="154"/>
        <end position="157"/>
    </location>
</feature>
<feature type="strand" evidence="29">
    <location>
        <begin position="158"/>
        <end position="163"/>
    </location>
</feature>
<feature type="strand" evidence="29">
    <location>
        <begin position="170"/>
        <end position="175"/>
    </location>
</feature>
<feature type="strand" evidence="29">
    <location>
        <begin position="182"/>
        <end position="187"/>
    </location>
</feature>
<feature type="turn" evidence="34">
    <location>
        <begin position="188"/>
        <end position="190"/>
    </location>
</feature>
<feature type="strand" evidence="29">
    <location>
        <begin position="192"/>
        <end position="196"/>
    </location>
</feature>
<feature type="strand" evidence="29">
    <location>
        <begin position="199"/>
        <end position="201"/>
    </location>
</feature>
<feature type="strand" evidence="29">
    <location>
        <begin position="203"/>
        <end position="205"/>
    </location>
</feature>
<feature type="strand" evidence="28">
    <location>
        <begin position="209"/>
        <end position="211"/>
    </location>
</feature>
<feature type="strand" evidence="29">
    <location>
        <begin position="215"/>
        <end position="220"/>
    </location>
</feature>
<feature type="turn" evidence="31">
    <location>
        <begin position="222"/>
        <end position="224"/>
    </location>
</feature>
<feature type="strand" evidence="29">
    <location>
        <begin position="227"/>
        <end position="232"/>
    </location>
</feature>
<feature type="strand" evidence="29">
    <location>
        <begin position="235"/>
        <end position="242"/>
    </location>
</feature>
<feature type="strand" evidence="30">
    <location>
        <begin position="245"/>
        <end position="247"/>
    </location>
</feature>
<feature type="strand" evidence="29">
    <location>
        <begin position="249"/>
        <end position="252"/>
    </location>
</feature>
<feature type="strand" evidence="29">
    <location>
        <begin position="258"/>
        <end position="263"/>
    </location>
</feature>
<feature type="strand" evidence="29">
    <location>
        <begin position="265"/>
        <end position="268"/>
    </location>
</feature>
<feature type="strand" evidence="29">
    <location>
        <begin position="271"/>
        <end position="275"/>
    </location>
</feature>
<feature type="strand" evidence="33">
    <location>
        <begin position="276"/>
        <end position="278"/>
    </location>
</feature>
<feature type="strand" evidence="29">
    <location>
        <begin position="280"/>
        <end position="283"/>
    </location>
</feature>
<feature type="strand" evidence="29">
    <location>
        <begin position="289"/>
        <end position="293"/>
    </location>
</feature>
<feature type="strand" evidence="29">
    <location>
        <begin position="300"/>
        <end position="305"/>
    </location>
</feature>
<feature type="strand" evidence="29">
    <location>
        <begin position="307"/>
        <end position="309"/>
    </location>
</feature>
<feature type="strand" evidence="29">
    <location>
        <begin position="312"/>
        <end position="317"/>
    </location>
</feature>
<feature type="strand" evidence="29">
    <location>
        <begin position="322"/>
        <end position="326"/>
    </location>
</feature>
<name>MEP50_HUMAN</name>
<accession>Q9BQA1</accession>
<accession>B3KMW6</accession>
<accession>B4DP38</accession>
<accession>Q3LID2</accession>
<accession>Q53FU2</accession>
<accession>Q6JZZ5</accession>
<accession>Q96GK4</accession>
<accession>Q9BWY3</accession>
<protein>
    <recommendedName>
        <fullName evidence="20">Methylosome protein WDR77</fullName>
    </recommendedName>
    <alternativeName>
        <fullName evidence="18">Androgen receptor cofactor p44</fullName>
    </alternativeName>
    <alternativeName>
        <fullName evidence="21">Methylosome protein 50</fullName>
        <shortName evidence="20">MEP-50</shortName>
    </alternativeName>
    <alternativeName>
        <fullName evidence="21">WD repeat-containing protein 77</fullName>
    </alternativeName>
    <alternativeName>
        <fullName evidence="16">p44/Mep50</fullName>
    </alternativeName>
</protein>
<sequence>MRKETPPPLVPPAAREWNLPPNAPACMERQLEAARYRSDGALLLGASSLSGRCWAGSLWLFKDPCAAPNEGFCSAGVQTEAGVADLTWVGERGILVASDSGAVELWELDENETLIVSKFCKYEHDDIVSTVSVLSSGTQAVSGSKDICIKVWDLAQQVVLSSYRAHAAQVTCVAASPHKDSVFLSCSEDNRILLWDTRCPKPASQIGCSAPGYLPTSLAWHPQQSEVFVFGDENGTVSLVDTKSTSCVLSSAVHSQCVTGLVFSPHSVPFLASLSEDCSLAVLDSSLSELFRSQAHRDFVRDATWSPLNHSLLTTVGWDHQVVHHVVPTEPLPAPGPASVTE</sequence>
<dbReference type="EMBL" id="AF478464">
    <property type="protein sequence ID" value="AAL79917.1"/>
    <property type="molecule type" value="mRNA"/>
</dbReference>
<dbReference type="EMBL" id="AK022860">
    <property type="protein sequence ID" value="BAG51128.1"/>
    <property type="molecule type" value="mRNA"/>
</dbReference>
<dbReference type="EMBL" id="AK298179">
    <property type="protein sequence ID" value="BAG60450.1"/>
    <property type="molecule type" value="mRNA"/>
</dbReference>
<dbReference type="EMBL" id="AK223189">
    <property type="protein sequence ID" value="BAD96909.1"/>
    <property type="molecule type" value="mRNA"/>
</dbReference>
<dbReference type="EMBL" id="AY225316">
    <property type="protein sequence ID" value="AAP79114.1"/>
    <property type="molecule type" value="mRNA"/>
</dbReference>
<dbReference type="EMBL" id="AB073603">
    <property type="protein sequence ID" value="BAD38641.1"/>
    <property type="molecule type" value="mRNA"/>
</dbReference>
<dbReference type="EMBL" id="AL390195">
    <property type="status" value="NOT_ANNOTATED_CDS"/>
    <property type="molecule type" value="Genomic_DNA"/>
</dbReference>
<dbReference type="EMBL" id="CH471122">
    <property type="protein sequence ID" value="EAW56493.1"/>
    <property type="molecule type" value="Genomic_DNA"/>
</dbReference>
<dbReference type="EMBL" id="BC001679">
    <property type="protein sequence ID" value="AAH01679.1"/>
    <property type="molecule type" value="mRNA"/>
</dbReference>
<dbReference type="EMBL" id="BC006477">
    <property type="protein sequence ID" value="AAH06477.1"/>
    <property type="molecule type" value="mRNA"/>
</dbReference>
<dbReference type="EMBL" id="BC009411">
    <property type="protein sequence ID" value="AAH09411.1"/>
    <property type="molecule type" value="mRNA"/>
</dbReference>
<dbReference type="EMBL" id="BC011778">
    <property type="protein sequence ID" value="AAH11778.1"/>
    <property type="molecule type" value="mRNA"/>
</dbReference>
<dbReference type="EMBL" id="BC016946">
    <property type="protein sequence ID" value="AAH16946.1"/>
    <property type="molecule type" value="mRNA"/>
</dbReference>
<dbReference type="EMBL" id="AB074171">
    <property type="protein sequence ID" value="BAE45736.1"/>
    <property type="molecule type" value="mRNA"/>
</dbReference>
<dbReference type="CCDS" id="CCDS835.1">
    <molecule id="Q9BQA1-1"/>
</dbReference>
<dbReference type="RefSeq" id="NP_001303991.1">
    <property type="nucleotide sequence ID" value="NM_001317062.1"/>
</dbReference>
<dbReference type="RefSeq" id="NP_001303992.1">
    <property type="nucleotide sequence ID" value="NM_001317063.1"/>
</dbReference>
<dbReference type="RefSeq" id="NP_001303993.1">
    <molecule id="Q9BQA1-2"/>
    <property type="nucleotide sequence ID" value="NM_001317064.2"/>
</dbReference>
<dbReference type="RefSeq" id="NP_077007.1">
    <molecule id="Q9BQA1-1"/>
    <property type="nucleotide sequence ID" value="NM_024102.4"/>
</dbReference>
<dbReference type="PDB" id="4GQB">
    <property type="method" value="X-ray"/>
    <property type="resolution" value="2.06 A"/>
    <property type="chains" value="B=2-342"/>
</dbReference>
<dbReference type="PDB" id="4X60">
    <property type="method" value="X-ray"/>
    <property type="resolution" value="2.35 A"/>
    <property type="chains" value="B=2-342"/>
</dbReference>
<dbReference type="PDB" id="4X61">
    <property type="method" value="X-ray"/>
    <property type="resolution" value="2.85 A"/>
    <property type="chains" value="B=2-342"/>
</dbReference>
<dbReference type="PDB" id="4X63">
    <property type="method" value="X-ray"/>
    <property type="resolution" value="3.05 A"/>
    <property type="chains" value="B=2-342"/>
</dbReference>
<dbReference type="PDB" id="5C9Z">
    <property type="method" value="X-ray"/>
    <property type="resolution" value="2.36 A"/>
    <property type="chains" value="B=2-342"/>
</dbReference>
<dbReference type="PDB" id="5EMJ">
    <property type="method" value="X-ray"/>
    <property type="resolution" value="2.27 A"/>
    <property type="chains" value="B=2-342"/>
</dbReference>
<dbReference type="PDB" id="5EMK">
    <property type="method" value="X-ray"/>
    <property type="resolution" value="2.52 A"/>
    <property type="chains" value="B=2-342"/>
</dbReference>
<dbReference type="PDB" id="5EML">
    <property type="method" value="X-ray"/>
    <property type="resolution" value="2.39 A"/>
    <property type="chains" value="B=2-342"/>
</dbReference>
<dbReference type="PDB" id="5EMM">
    <property type="method" value="X-ray"/>
    <property type="resolution" value="2.37 A"/>
    <property type="chains" value="B=2-342"/>
</dbReference>
<dbReference type="PDB" id="5FA5">
    <property type="method" value="X-ray"/>
    <property type="resolution" value="2.34 A"/>
    <property type="chains" value="B=2-342"/>
</dbReference>
<dbReference type="PDB" id="6CKC">
    <property type="method" value="X-ray"/>
    <property type="resolution" value="2.80 A"/>
    <property type="chains" value="B=2-342"/>
</dbReference>
<dbReference type="PDB" id="6K1S">
    <property type="method" value="X-ray"/>
    <property type="resolution" value="2.60 A"/>
    <property type="chains" value="B=2-342"/>
</dbReference>
<dbReference type="PDB" id="6RLL">
    <property type="method" value="X-ray"/>
    <property type="resolution" value="2.22 A"/>
    <property type="chains" value="B=2-342"/>
</dbReference>
<dbReference type="PDB" id="6RLQ">
    <property type="method" value="X-ray"/>
    <property type="resolution" value="2.53 A"/>
    <property type="chains" value="B=2-342"/>
</dbReference>
<dbReference type="PDB" id="6UGH">
    <property type="method" value="EM"/>
    <property type="resolution" value="3.40 A"/>
    <property type="chains" value="B=2-342"/>
</dbReference>
<dbReference type="PDB" id="6UXX">
    <property type="method" value="X-ray"/>
    <property type="resolution" value="2.69 A"/>
    <property type="chains" value="B=2-342"/>
</dbReference>
<dbReference type="PDB" id="6UXY">
    <property type="method" value="X-ray"/>
    <property type="resolution" value="2.57 A"/>
    <property type="chains" value="B=2-342"/>
</dbReference>
<dbReference type="PDB" id="6V0N">
    <property type="method" value="X-ray"/>
    <property type="resolution" value="2.11 A"/>
    <property type="chains" value="B=2-342"/>
</dbReference>
<dbReference type="PDB" id="6V0O">
    <property type="method" value="X-ray"/>
    <property type="resolution" value="2.86 A"/>
    <property type="chains" value="B=2-342"/>
</dbReference>
<dbReference type="PDB" id="6V0P">
    <property type="method" value="X-ray"/>
    <property type="resolution" value="1.88 A"/>
    <property type="chains" value="B=2-342"/>
</dbReference>
<dbReference type="PDB" id="7BO7">
    <property type="method" value="X-ray"/>
    <property type="resolution" value="2.83 A"/>
    <property type="chains" value="BBB=2-342"/>
</dbReference>
<dbReference type="PDB" id="7KIB">
    <property type="method" value="X-ray"/>
    <property type="resolution" value="2.52 A"/>
    <property type="chains" value="B=2-342"/>
</dbReference>
<dbReference type="PDB" id="7KIC">
    <property type="method" value="X-ray"/>
    <property type="resolution" value="2.43 A"/>
    <property type="chains" value="B=2-342"/>
</dbReference>
<dbReference type="PDB" id="7KID">
    <property type="method" value="X-ray"/>
    <property type="resolution" value="2.50 A"/>
    <property type="chains" value="B=2-342"/>
</dbReference>
<dbReference type="PDB" id="7L1G">
    <property type="method" value="X-ray"/>
    <property type="resolution" value="2.47 A"/>
    <property type="chains" value="B=2-342"/>
</dbReference>
<dbReference type="PDB" id="7M05">
    <property type="method" value="EM"/>
    <property type="resolution" value="2.39 A"/>
    <property type="chains" value="B/D/F/H=2-342"/>
</dbReference>
<dbReference type="PDB" id="7MX7">
    <property type="method" value="X-ray"/>
    <property type="resolution" value="2.49 A"/>
    <property type="chains" value="B=2-342"/>
</dbReference>
<dbReference type="PDB" id="7MXA">
    <property type="method" value="X-ray"/>
    <property type="resolution" value="2.71 A"/>
    <property type="chains" value="B=2-342"/>
</dbReference>
<dbReference type="PDB" id="7MXC">
    <property type="method" value="X-ray"/>
    <property type="resolution" value="2.41 A"/>
    <property type="chains" value="B=2-342"/>
</dbReference>
<dbReference type="PDB" id="7MXG">
    <property type="method" value="X-ray"/>
    <property type="resolution" value="2.40 A"/>
    <property type="chains" value="B/D=2-342"/>
</dbReference>
<dbReference type="PDB" id="7MXN">
    <property type="method" value="X-ray"/>
    <property type="resolution" value="2.55 A"/>
    <property type="chains" value="B=2-342"/>
</dbReference>
<dbReference type="PDB" id="7S0U">
    <property type="method" value="X-ray"/>
    <property type="resolution" value="2.01 A"/>
    <property type="chains" value="B=2-342"/>
</dbReference>
<dbReference type="PDB" id="7S1P">
    <property type="method" value="X-ray"/>
    <property type="resolution" value="2.21 A"/>
    <property type="chains" value="B=2-342"/>
</dbReference>
<dbReference type="PDB" id="7S1Q">
    <property type="method" value="X-ray"/>
    <property type="resolution" value="2.78 A"/>
    <property type="chains" value="B=2-342"/>
</dbReference>
<dbReference type="PDB" id="7S1R">
    <property type="method" value="X-ray"/>
    <property type="resolution" value="2.10 A"/>
    <property type="chains" value="B=2-342"/>
</dbReference>
<dbReference type="PDB" id="7S1S">
    <property type="method" value="X-ray"/>
    <property type="resolution" value="2.62 A"/>
    <property type="chains" value="B=2-342"/>
</dbReference>
<dbReference type="PDB" id="7SER">
    <property type="method" value="X-ray"/>
    <property type="resolution" value="2.14 A"/>
    <property type="chains" value="B=2-342"/>
</dbReference>
<dbReference type="PDB" id="7SES">
    <property type="method" value="X-ray"/>
    <property type="resolution" value="2.50 A"/>
    <property type="chains" value="B=2-342"/>
</dbReference>
<dbReference type="PDB" id="7U30">
    <property type="method" value="X-ray"/>
    <property type="resolution" value="2.60 A"/>
    <property type="chains" value="B=18-342"/>
</dbReference>
<dbReference type="PDB" id="7UOH">
    <property type="method" value="X-ray"/>
    <property type="resolution" value="2.70 A"/>
    <property type="chains" value="B=2-342"/>
</dbReference>
<dbReference type="PDB" id="7UY1">
    <property type="method" value="X-ray"/>
    <property type="resolution" value="2.66 A"/>
    <property type="chains" value="B=2-342"/>
</dbReference>
<dbReference type="PDB" id="7UYF">
    <property type="method" value="X-ray"/>
    <property type="resolution" value="2.82 A"/>
    <property type="chains" value="B=2-342"/>
</dbReference>
<dbReference type="PDB" id="7ZUP">
    <property type="method" value="X-ray"/>
    <property type="resolution" value="2.01 A"/>
    <property type="chains" value="B=2-342"/>
</dbReference>
<dbReference type="PDB" id="7ZUQ">
    <property type="method" value="X-ray"/>
    <property type="resolution" value="2.48 A"/>
    <property type="chains" value="B=2-342"/>
</dbReference>
<dbReference type="PDB" id="7ZUU">
    <property type="method" value="X-ray"/>
    <property type="resolution" value="2.09 A"/>
    <property type="chains" value="B=2-342"/>
</dbReference>
<dbReference type="PDB" id="7ZUY">
    <property type="method" value="X-ray"/>
    <property type="resolution" value="2.00 A"/>
    <property type="chains" value="B=2-342"/>
</dbReference>
<dbReference type="PDB" id="7ZV2">
    <property type="method" value="X-ray"/>
    <property type="resolution" value="2.01 A"/>
    <property type="chains" value="B=2-342"/>
</dbReference>
<dbReference type="PDB" id="7ZVL">
    <property type="method" value="X-ray"/>
    <property type="resolution" value="2.39 A"/>
    <property type="chains" value="B=2-342"/>
</dbReference>
<dbReference type="PDB" id="7ZVU">
    <property type="method" value="X-ray"/>
    <property type="resolution" value="1.95 A"/>
    <property type="chains" value="B=2-342"/>
</dbReference>
<dbReference type="PDB" id="8CSG">
    <property type="method" value="X-ray"/>
    <property type="resolution" value="2.48 A"/>
    <property type="chains" value="B=2-342"/>
</dbReference>
<dbReference type="PDB" id="8CTB">
    <property type="method" value="X-ray"/>
    <property type="resolution" value="2.61 A"/>
    <property type="chains" value="B=2-342"/>
</dbReference>
<dbReference type="PDB" id="8CYI">
    <property type="method" value="EM"/>
    <property type="resolution" value="3.14 A"/>
    <property type="chains" value="B=21-329"/>
</dbReference>
<dbReference type="PDB" id="8G1U">
    <property type="method" value="EM"/>
    <property type="resolution" value="2.83 A"/>
    <property type="chains" value="B/F/J/N=1-342"/>
</dbReference>
<dbReference type="PDB" id="8VEO">
    <property type="method" value="X-ray"/>
    <property type="resolution" value="2.03 A"/>
    <property type="chains" value="B=2-342"/>
</dbReference>
<dbReference type="PDB" id="8VET">
    <property type="method" value="X-ray"/>
    <property type="resolution" value="2.63 A"/>
    <property type="chains" value="B=2-342"/>
</dbReference>
<dbReference type="PDB" id="8VEU">
    <property type="method" value="X-ray"/>
    <property type="resolution" value="2.46 A"/>
    <property type="chains" value="B=2-342"/>
</dbReference>
<dbReference type="PDB" id="8VEW">
    <property type="method" value="X-ray"/>
    <property type="resolution" value="2.69 A"/>
    <property type="chains" value="B=2-342"/>
</dbReference>
<dbReference type="PDB" id="8VEX">
    <property type="method" value="X-ray"/>
    <property type="resolution" value="2.79 A"/>
    <property type="chains" value="B=2-342"/>
</dbReference>
<dbReference type="PDB" id="8VEY">
    <property type="method" value="X-ray"/>
    <property type="resolution" value="2.44 A"/>
    <property type="chains" value="B=2-342"/>
</dbReference>
<dbReference type="PDB" id="8X6L">
    <property type="method" value="EM"/>
    <property type="resolution" value="3.16 A"/>
    <property type="chains" value="B/D/G/H=1-342"/>
</dbReference>
<dbReference type="PDB" id="9C10">
    <property type="method" value="X-ray"/>
    <property type="resolution" value="2.85 A"/>
    <property type="chains" value="B=2-342"/>
</dbReference>
<dbReference type="PDB" id="9DOD">
    <property type="method" value="X-ray"/>
    <property type="resolution" value="2.50 A"/>
    <property type="chains" value="B=2-342"/>
</dbReference>
<dbReference type="PDB" id="9E3A">
    <property type="method" value="EM"/>
    <property type="resolution" value="3.36 A"/>
    <property type="chains" value="K=1-342"/>
</dbReference>
<dbReference type="PDB" id="9E3B">
    <property type="method" value="EM"/>
    <property type="resolution" value="3.06 A"/>
    <property type="chains" value="B/E/H/K=1-342"/>
</dbReference>
<dbReference type="PDB" id="9EYU">
    <property type="method" value="X-ray"/>
    <property type="resolution" value="2.35 A"/>
    <property type="chains" value="B=1-342"/>
</dbReference>
<dbReference type="PDB" id="9EYV">
    <property type="method" value="X-ray"/>
    <property type="resolution" value="2.15 A"/>
    <property type="chains" value="B=1-342"/>
</dbReference>
<dbReference type="PDB" id="9EYW">
    <property type="method" value="X-ray"/>
    <property type="resolution" value="2.30 A"/>
    <property type="chains" value="B=1-342"/>
</dbReference>
<dbReference type="PDB" id="9EYX">
    <property type="method" value="X-ray"/>
    <property type="resolution" value="2.20 A"/>
    <property type="chains" value="B=1-342"/>
</dbReference>
<dbReference type="PDB" id="9MGL">
    <property type="method" value="X-ray"/>
    <property type="resolution" value="2.25 A"/>
    <property type="chains" value="B=2-342"/>
</dbReference>
<dbReference type="PDB" id="9MGM">
    <property type="method" value="X-ray"/>
    <property type="resolution" value="2.25 A"/>
    <property type="chains" value="B=2-342"/>
</dbReference>
<dbReference type="PDB" id="9MGN">
    <property type="method" value="X-ray"/>
    <property type="resolution" value="2.82 A"/>
    <property type="chains" value="B=2-342"/>
</dbReference>
<dbReference type="PDB" id="9MGP">
    <property type="method" value="X-ray"/>
    <property type="resolution" value="2.67 A"/>
    <property type="chains" value="B=2-342"/>
</dbReference>
<dbReference type="PDB" id="9MGQ">
    <property type="method" value="X-ray"/>
    <property type="resolution" value="1.85 A"/>
    <property type="chains" value="B=2-342"/>
</dbReference>
<dbReference type="PDB" id="9MGR">
    <property type="method" value="X-ray"/>
    <property type="resolution" value="2.07 A"/>
    <property type="chains" value="B=2-342"/>
</dbReference>
<dbReference type="PDB" id="9N3N">
    <property type="method" value="X-ray"/>
    <property type="resolution" value="2.75 A"/>
    <property type="chains" value="B=2-342"/>
</dbReference>
<dbReference type="PDB" id="9N3O">
    <property type="method" value="X-ray"/>
    <property type="resolution" value="2.37 A"/>
    <property type="chains" value="B=2-342"/>
</dbReference>
<dbReference type="PDB" id="9N3P">
    <property type="method" value="X-ray"/>
    <property type="resolution" value="2.51 A"/>
    <property type="chains" value="B=2-342"/>
</dbReference>
<dbReference type="PDB" id="9N3Q">
    <property type="method" value="X-ray"/>
    <property type="resolution" value="2.54 A"/>
    <property type="chains" value="B/D=2-342"/>
</dbReference>
<dbReference type="PDB" id="9N3R">
    <property type="method" value="X-ray"/>
    <property type="resolution" value="2.47 A"/>
    <property type="chains" value="B/D=2-342"/>
</dbReference>
<dbReference type="PDBsum" id="4GQB"/>
<dbReference type="PDBsum" id="4X60"/>
<dbReference type="PDBsum" id="4X61"/>
<dbReference type="PDBsum" id="4X63"/>
<dbReference type="PDBsum" id="5C9Z"/>
<dbReference type="PDBsum" id="5EMJ"/>
<dbReference type="PDBsum" id="5EMK"/>
<dbReference type="PDBsum" id="5EML"/>
<dbReference type="PDBsum" id="5EMM"/>
<dbReference type="PDBsum" id="5FA5"/>
<dbReference type="PDBsum" id="6CKC"/>
<dbReference type="PDBsum" id="6K1S"/>
<dbReference type="PDBsum" id="6RLL"/>
<dbReference type="PDBsum" id="6RLQ"/>
<dbReference type="PDBsum" id="6UGH"/>
<dbReference type="PDBsum" id="6UXX"/>
<dbReference type="PDBsum" id="6UXY"/>
<dbReference type="PDBsum" id="6V0N"/>
<dbReference type="PDBsum" id="6V0O"/>
<dbReference type="PDBsum" id="6V0P"/>
<dbReference type="PDBsum" id="7BO7"/>
<dbReference type="PDBsum" id="7KIB"/>
<dbReference type="PDBsum" id="7KIC"/>
<dbReference type="PDBsum" id="7KID"/>
<dbReference type="PDBsum" id="7L1G"/>
<dbReference type="PDBsum" id="7M05"/>
<dbReference type="PDBsum" id="7MX7"/>
<dbReference type="PDBsum" id="7MXA"/>
<dbReference type="PDBsum" id="7MXC"/>
<dbReference type="PDBsum" id="7MXG"/>
<dbReference type="PDBsum" id="7MXN"/>
<dbReference type="PDBsum" id="7S0U"/>
<dbReference type="PDBsum" id="7S1P"/>
<dbReference type="PDBsum" id="7S1Q"/>
<dbReference type="PDBsum" id="7S1R"/>
<dbReference type="PDBsum" id="7S1S"/>
<dbReference type="PDBsum" id="7SER"/>
<dbReference type="PDBsum" id="7SES"/>
<dbReference type="PDBsum" id="7U30"/>
<dbReference type="PDBsum" id="7UOH"/>
<dbReference type="PDBsum" id="7UY1"/>
<dbReference type="PDBsum" id="7UYF"/>
<dbReference type="PDBsum" id="7ZUP"/>
<dbReference type="PDBsum" id="7ZUQ"/>
<dbReference type="PDBsum" id="7ZUU"/>
<dbReference type="PDBsum" id="7ZUY"/>
<dbReference type="PDBsum" id="7ZV2"/>
<dbReference type="PDBsum" id="7ZVL"/>
<dbReference type="PDBsum" id="7ZVU"/>
<dbReference type="PDBsum" id="8CSG"/>
<dbReference type="PDBsum" id="8CTB"/>
<dbReference type="PDBsum" id="8CYI"/>
<dbReference type="PDBsum" id="8G1U"/>
<dbReference type="PDBsum" id="8VEO"/>
<dbReference type="PDBsum" id="8VET"/>
<dbReference type="PDBsum" id="8VEU"/>
<dbReference type="PDBsum" id="8VEW"/>
<dbReference type="PDBsum" id="8VEX"/>
<dbReference type="PDBsum" id="8VEY"/>
<dbReference type="PDBsum" id="8X6L"/>
<dbReference type="PDBsum" id="9C10"/>
<dbReference type="PDBsum" id="9DOD"/>
<dbReference type="PDBsum" id="9E3A"/>
<dbReference type="PDBsum" id="9E3B"/>
<dbReference type="PDBsum" id="9EYU"/>
<dbReference type="PDBsum" id="9EYV"/>
<dbReference type="PDBsum" id="9EYW"/>
<dbReference type="PDBsum" id="9EYX"/>
<dbReference type="PDBsum" id="9MGL"/>
<dbReference type="PDBsum" id="9MGM"/>
<dbReference type="PDBsum" id="9MGN"/>
<dbReference type="PDBsum" id="9MGP"/>
<dbReference type="PDBsum" id="9MGQ"/>
<dbReference type="PDBsum" id="9MGR"/>
<dbReference type="PDBsum" id="9N3N"/>
<dbReference type="PDBsum" id="9N3O"/>
<dbReference type="PDBsum" id="9N3P"/>
<dbReference type="PDBsum" id="9N3Q"/>
<dbReference type="PDBsum" id="9N3R"/>
<dbReference type="EMDB" id="EMD-20764"/>
<dbReference type="EMDB" id="EMD-23609"/>
<dbReference type="EMDB" id="EMD-27078"/>
<dbReference type="EMDB" id="EMD-29677"/>
<dbReference type="EMDB" id="EMD-38091"/>
<dbReference type="EMDB" id="EMD-47476"/>
<dbReference type="EMDB" id="EMD-47477"/>
<dbReference type="EMDB" id="EMD-7137"/>
<dbReference type="SMR" id="Q9BQA1"/>
<dbReference type="BioGRID" id="122532">
    <property type="interactions" value="374"/>
</dbReference>
<dbReference type="ComplexPortal" id="CPX-696">
    <property type="entry name" value="PRMT5 methylosome complex, CLNS1A variant"/>
</dbReference>
<dbReference type="ComplexPortal" id="CPX-8148">
    <property type="entry name" value="PRMT5 methylosome complex, RIOK1 variant"/>
</dbReference>
<dbReference type="ComplexPortal" id="CPX-8149">
    <property type="entry name" value="PRMT5 methylosome complex, COPR5 variant"/>
</dbReference>
<dbReference type="CORUM" id="Q9BQA1"/>
<dbReference type="DIP" id="DIP-38172N"/>
<dbReference type="FunCoup" id="Q9BQA1">
    <property type="interactions" value="3688"/>
</dbReference>
<dbReference type="IntAct" id="Q9BQA1">
    <property type="interactions" value="125"/>
</dbReference>
<dbReference type="MINT" id="Q9BQA1"/>
<dbReference type="STRING" id="9606.ENSP00000235090"/>
<dbReference type="BindingDB" id="Q9BQA1"/>
<dbReference type="ChEMBL" id="CHEMBL3108649"/>
<dbReference type="GlyGen" id="Q9BQA1">
    <property type="glycosylation" value="1 site, 1 O-linked glycan (1 site)"/>
</dbReference>
<dbReference type="iPTMnet" id="Q9BQA1"/>
<dbReference type="PhosphoSitePlus" id="Q9BQA1"/>
<dbReference type="SwissPalm" id="Q9BQA1"/>
<dbReference type="BioMuta" id="WDR77"/>
<dbReference type="DMDM" id="32171507"/>
<dbReference type="REPRODUCTION-2DPAGE" id="IPI00012202"/>
<dbReference type="jPOST" id="Q9BQA1"/>
<dbReference type="MassIVE" id="Q9BQA1"/>
<dbReference type="PaxDb" id="9606-ENSP00000235090"/>
<dbReference type="PeptideAtlas" id="Q9BQA1"/>
<dbReference type="ProteomicsDB" id="4753"/>
<dbReference type="ProteomicsDB" id="78647">
    <molecule id="Q9BQA1-1"/>
</dbReference>
<dbReference type="Pumba" id="Q9BQA1"/>
<dbReference type="Antibodypedia" id="35257">
    <property type="antibodies" value="295 antibodies from 33 providers"/>
</dbReference>
<dbReference type="DNASU" id="79084"/>
<dbReference type="Ensembl" id="ENST00000235090.10">
    <molecule id="Q9BQA1-1"/>
    <property type="protein sequence ID" value="ENSP00000235090.5"/>
    <property type="gene ID" value="ENSG00000116455.14"/>
</dbReference>
<dbReference type="GeneID" id="79084"/>
<dbReference type="KEGG" id="hsa:79084"/>
<dbReference type="MANE-Select" id="ENST00000235090.10">
    <property type="protein sequence ID" value="ENSP00000235090.5"/>
    <property type="RefSeq nucleotide sequence ID" value="NM_024102.4"/>
    <property type="RefSeq protein sequence ID" value="NP_077007.1"/>
</dbReference>
<dbReference type="UCSC" id="uc001ebb.4">
    <molecule id="Q9BQA1-1"/>
    <property type="organism name" value="human"/>
</dbReference>
<dbReference type="AGR" id="HGNC:29652"/>
<dbReference type="CTD" id="79084"/>
<dbReference type="DisGeNET" id="79084"/>
<dbReference type="GeneCards" id="WDR77"/>
<dbReference type="HGNC" id="HGNC:29652">
    <property type="gene designation" value="WDR77"/>
</dbReference>
<dbReference type="HPA" id="ENSG00000116455">
    <property type="expression patterns" value="Tissue enhanced (fallopian)"/>
</dbReference>
<dbReference type="MIM" id="611734">
    <property type="type" value="gene"/>
</dbReference>
<dbReference type="neXtProt" id="NX_Q9BQA1"/>
<dbReference type="OpenTargets" id="ENSG00000116455"/>
<dbReference type="PharmGKB" id="PA142670581"/>
<dbReference type="VEuPathDB" id="HostDB:ENSG00000116455"/>
<dbReference type="eggNOG" id="KOG0284">
    <property type="taxonomic scope" value="Eukaryota"/>
</dbReference>
<dbReference type="GeneTree" id="ENSGT00390000010711"/>
<dbReference type="HOGENOM" id="CLU_051285_0_0_1"/>
<dbReference type="InParanoid" id="Q9BQA1"/>
<dbReference type="OMA" id="QMGCNAS"/>
<dbReference type="OrthoDB" id="10260946at2759"/>
<dbReference type="PAN-GO" id="Q9BQA1">
    <property type="GO annotations" value="2 GO annotations based on evolutionary models"/>
</dbReference>
<dbReference type="PhylomeDB" id="Q9BQA1"/>
<dbReference type="TreeFam" id="TF325967"/>
<dbReference type="PathwayCommons" id="Q9BQA1"/>
<dbReference type="Reactome" id="R-HSA-191859">
    <property type="pathway name" value="snRNP Assembly"/>
</dbReference>
<dbReference type="Reactome" id="R-HSA-3214858">
    <property type="pathway name" value="RMTs methylate histone arginines"/>
</dbReference>
<dbReference type="SignaLink" id="Q9BQA1"/>
<dbReference type="BioGRID-ORCS" id="79084">
    <property type="hits" value="770 hits in 1169 CRISPR screens"/>
</dbReference>
<dbReference type="CD-CODE" id="232F8A39">
    <property type="entry name" value="P-body"/>
</dbReference>
<dbReference type="ChiTaRS" id="WDR77">
    <property type="organism name" value="human"/>
</dbReference>
<dbReference type="EvolutionaryTrace" id="Q9BQA1"/>
<dbReference type="GeneWiki" id="WD_repeat-containing_protein_77"/>
<dbReference type="GenomeRNAi" id="79084"/>
<dbReference type="Pharos" id="Q9BQA1">
    <property type="development level" value="Tbio"/>
</dbReference>
<dbReference type="PRO" id="PR:Q9BQA1"/>
<dbReference type="Proteomes" id="UP000005640">
    <property type="component" value="Chromosome 1"/>
</dbReference>
<dbReference type="RNAct" id="Q9BQA1">
    <property type="molecule type" value="protein"/>
</dbReference>
<dbReference type="Bgee" id="ENSG00000116455">
    <property type="expression patterns" value="Expressed in right uterine tube and 202 other cell types or tissues"/>
</dbReference>
<dbReference type="ExpressionAtlas" id="Q9BQA1">
    <property type="expression patterns" value="baseline and differential"/>
</dbReference>
<dbReference type="GO" id="GO:0031465">
    <property type="term" value="C:Cul4B-RING E3 ubiquitin ligase complex"/>
    <property type="evidence" value="ECO:0007669"/>
    <property type="project" value="Ensembl"/>
</dbReference>
<dbReference type="GO" id="GO:0005737">
    <property type="term" value="C:cytoplasm"/>
    <property type="evidence" value="ECO:0000314"/>
    <property type="project" value="UniProtKB"/>
</dbReference>
<dbReference type="GO" id="GO:0005829">
    <property type="term" value="C:cytosol"/>
    <property type="evidence" value="ECO:0000314"/>
    <property type="project" value="HPA"/>
</dbReference>
<dbReference type="GO" id="GO:0005794">
    <property type="term" value="C:Golgi apparatus"/>
    <property type="evidence" value="ECO:0000314"/>
    <property type="project" value="HPA"/>
</dbReference>
<dbReference type="GO" id="GO:0034709">
    <property type="term" value="C:methylosome"/>
    <property type="evidence" value="ECO:0000314"/>
    <property type="project" value="UniProtKB"/>
</dbReference>
<dbReference type="GO" id="GO:0005654">
    <property type="term" value="C:nucleoplasm"/>
    <property type="evidence" value="ECO:0000314"/>
    <property type="project" value="HPA"/>
</dbReference>
<dbReference type="GO" id="GO:0005634">
    <property type="term" value="C:nucleus"/>
    <property type="evidence" value="ECO:0000314"/>
    <property type="project" value="UniProtKB"/>
</dbReference>
<dbReference type="GO" id="GO:0008327">
    <property type="term" value="F:methyl-CpG binding"/>
    <property type="evidence" value="ECO:0000314"/>
    <property type="project" value="UniProtKB"/>
</dbReference>
<dbReference type="GO" id="GO:0003713">
    <property type="term" value="F:transcription coactivator activity"/>
    <property type="evidence" value="ECO:0000316"/>
    <property type="project" value="MGI"/>
</dbReference>
<dbReference type="GO" id="GO:1990756">
    <property type="term" value="F:ubiquitin-like ligase-substrate adaptor activity"/>
    <property type="evidence" value="ECO:0007669"/>
    <property type="project" value="Ensembl"/>
</dbReference>
<dbReference type="GO" id="GO:0060767">
    <property type="term" value="P:epithelial cell proliferation involved in prostate gland development"/>
    <property type="evidence" value="ECO:0007669"/>
    <property type="project" value="Ensembl"/>
</dbReference>
<dbReference type="GO" id="GO:0060770">
    <property type="term" value="P:negative regulation of epithelial cell proliferation involved in prostate gland development"/>
    <property type="evidence" value="ECO:0007669"/>
    <property type="project" value="Ensembl"/>
</dbReference>
<dbReference type="GO" id="GO:0007309">
    <property type="term" value="P:oocyte axis specification"/>
    <property type="evidence" value="ECO:0000318"/>
    <property type="project" value="GO_Central"/>
</dbReference>
<dbReference type="GO" id="GO:0008284">
    <property type="term" value="P:positive regulation of cell population proliferation"/>
    <property type="evidence" value="ECO:0007669"/>
    <property type="project" value="Ensembl"/>
</dbReference>
<dbReference type="GO" id="GO:0048026">
    <property type="term" value="P:positive regulation of mRNA splicing, via spliceosome"/>
    <property type="evidence" value="ECO:0000303"/>
    <property type="project" value="ComplexPortal"/>
</dbReference>
<dbReference type="GO" id="GO:0000209">
    <property type="term" value="P:protein polyubiquitination"/>
    <property type="evidence" value="ECO:0007669"/>
    <property type="project" value="Ensembl"/>
</dbReference>
<dbReference type="GO" id="GO:0006357">
    <property type="term" value="P:regulation of transcription by RNA polymerase II"/>
    <property type="evidence" value="ECO:0007669"/>
    <property type="project" value="Ensembl"/>
</dbReference>
<dbReference type="GO" id="GO:0060528">
    <property type="term" value="P:secretory columnal luminar epithelial cell differentiation involved in prostate glandular acinus development"/>
    <property type="evidence" value="ECO:0007669"/>
    <property type="project" value="Ensembl"/>
</dbReference>
<dbReference type="GO" id="GO:0000387">
    <property type="term" value="P:spliceosomal snRNP assembly"/>
    <property type="evidence" value="ECO:0000303"/>
    <property type="project" value="ComplexPortal"/>
</dbReference>
<dbReference type="GO" id="GO:0006511">
    <property type="term" value="P:ubiquitin-dependent protein catabolic process"/>
    <property type="evidence" value="ECO:0007669"/>
    <property type="project" value="Ensembl"/>
</dbReference>
<dbReference type="FunFam" id="2.130.10.10:FF:000322">
    <property type="entry name" value="Methylosome protein 50"/>
    <property type="match status" value="1"/>
</dbReference>
<dbReference type="Gene3D" id="2.130.10.10">
    <property type="entry name" value="YVTN repeat-like/Quinoprotein amine dehydrogenase"/>
    <property type="match status" value="1"/>
</dbReference>
<dbReference type="IDEAL" id="IID00583"/>
<dbReference type="InterPro" id="IPR052139">
    <property type="entry name" value="Methylosome_Comp_WDR77"/>
</dbReference>
<dbReference type="InterPro" id="IPR015943">
    <property type="entry name" value="WD40/YVTN_repeat-like_dom_sf"/>
</dbReference>
<dbReference type="InterPro" id="IPR019775">
    <property type="entry name" value="WD40_repeat_CS"/>
</dbReference>
<dbReference type="InterPro" id="IPR036322">
    <property type="entry name" value="WD40_repeat_dom_sf"/>
</dbReference>
<dbReference type="InterPro" id="IPR001680">
    <property type="entry name" value="WD40_rpt"/>
</dbReference>
<dbReference type="PANTHER" id="PTHR46853">
    <property type="entry name" value="METHYLOSOME PROTEIN 50"/>
    <property type="match status" value="1"/>
</dbReference>
<dbReference type="PANTHER" id="PTHR46853:SF3">
    <property type="entry name" value="METHYLOSOME PROTEIN WDR77"/>
    <property type="match status" value="1"/>
</dbReference>
<dbReference type="Pfam" id="PF00400">
    <property type="entry name" value="WD40"/>
    <property type="match status" value="2"/>
</dbReference>
<dbReference type="SMART" id="SM00320">
    <property type="entry name" value="WD40"/>
    <property type="match status" value="6"/>
</dbReference>
<dbReference type="SUPFAM" id="SSF50978">
    <property type="entry name" value="WD40 repeat-like"/>
    <property type="match status" value="1"/>
</dbReference>
<dbReference type="PROSITE" id="PS00678">
    <property type="entry name" value="WD_REPEATS_1"/>
    <property type="match status" value="1"/>
</dbReference>
<dbReference type="PROSITE" id="PS50082">
    <property type="entry name" value="WD_REPEATS_2"/>
    <property type="match status" value="2"/>
</dbReference>
<dbReference type="PROSITE" id="PS50294">
    <property type="entry name" value="WD_REPEATS_REGION"/>
    <property type="match status" value="1"/>
</dbReference>
<keyword id="KW-0002">3D-structure</keyword>
<keyword id="KW-0025">Alternative splicing</keyword>
<keyword id="KW-0963">Cytoplasm</keyword>
<keyword id="KW-0903">Direct protein sequencing</keyword>
<keyword id="KW-0539">Nucleus</keyword>
<keyword id="KW-0597">Phosphoprotein</keyword>
<keyword id="KW-1267">Proteomics identification</keyword>
<keyword id="KW-1185">Reference proteome</keyword>
<keyword id="KW-0677">Repeat</keyword>
<keyword id="KW-0853">WD repeat</keyword>
<comment type="function">
    <text evidence="2 11">Non-catalytic component of the methylosome complex, composed of PRMT5, WDR77 and CLNS1A, which modifies specific arginines to dimethylarginines in several spliceosomal Sm proteins and histones (PubMed:11756452). This modification targets Sm proteins to the survival of motor neurons (SMN) complex for assembly into small nuclear ribonucleoprotein core particles. Might play a role in transcription regulation. The methylosome complex also methylates the Piwi proteins (PIWIL1, PIWIL2 and PIWIL4), methylation of Piwi proteins being required for the interaction with Tudor domain-containing proteins and subsequent localization to the meiotic nuage (PubMed:23071334).</text>
</comment>
<comment type="subunit">
    <text evidence="2 3 4 5 6 8 9 10 11 12 13 14">Component of the methylosome complex composed of PRMT5, WDR77 and CLNS1A (PubMed:18984161, PubMed:21081503). Found in a complex composed of PRMT5, WDR77 and RIOK1 (PubMed:21081503). RIOK1 and CLNS1A bound directly to PRMT5 at the same binding site, in a mutually exclusive manner, which allows the recruitment of distinct methylation substrates, such as nucleolin/NCL and Sm proteins, respectively (PubMed:21081503). Found in a complex with the component of the methylosome, PRMT5, CLNS1A, WDR77, PRMT1 and ERH (PubMed:25284789). Directly interacts with PRMT5, as well as with several Sm proteins, including SNRPB and SNRPD2 and, more weakly, SNRPD3 and SNRPE (PubMed:11756452, PubMed:33376131). Forms a compact hetero-octamer with PRMT5, decorating the outer surface of a PRMT5 tetramer. Interacts with SUZ12 and histone H2A/H2AC20, but not with histones H2B, H3 nor H4 (PubMed:16712789). Interacts with CTDP1 and LSM11 (PubMed:12560496, PubMed:16087681). Interacts with APEX1, AR and NKX3-1 (PubMed:12972618, PubMed:19188445). Interacts with CHTOP (PubMed:25284789). Interacts with FAM47E. Interacts with TSC22D2 (PubMed:27337956).</text>
</comment>
<comment type="interaction">
    <interactant intactId="EBI-1237307">
        <id>Q9BQA1</id>
    </interactant>
    <interactant intactId="EBI-718729">
        <id>P55212</id>
        <label>CASP6</label>
    </interactant>
    <organismsDiffer>false</organismsDiffer>
    <experiments>3</experiments>
</comment>
<comment type="interaction">
    <interactant intactId="EBI-1237307">
        <id>Q9BQA1</id>
    </interactant>
    <interactant intactId="EBI-352682">
        <id>P04792</id>
        <label>HSPB1</label>
    </interactant>
    <organismsDiffer>false</organismsDiffer>
    <experiments>3</experiments>
</comment>
<comment type="interaction">
    <interactant intactId="EBI-1237307">
        <id>Q9BQA1</id>
    </interactant>
    <interactant intactId="EBI-10975473">
        <id>O60333-2</id>
        <label>KIF1B</label>
    </interactant>
    <organismsDiffer>false</organismsDiffer>
    <experiments>3</experiments>
</comment>
<comment type="interaction">
    <interactant intactId="EBI-1237307">
        <id>Q9BQA1</id>
    </interactant>
    <interactant intactId="EBI-21591415">
        <id>P13473-2</id>
        <label>LAMP2</label>
    </interactant>
    <organismsDiffer>false</organismsDiffer>
    <experiments>3</experiments>
</comment>
<comment type="interaction">
    <interactant intactId="EBI-1237307">
        <id>Q9BQA1</id>
    </interactant>
    <interactant intactId="EBI-351098">
        <id>O14744</id>
        <label>PRMT5</label>
    </interactant>
    <organismsDiffer>false</organismsDiffer>
    <experiments>17</experiments>
</comment>
<comment type="interaction">
    <interactant intactId="EBI-1237307">
        <id>Q9BQA1</id>
    </interactant>
    <interactant intactId="EBI-286642">
        <id>P62826</id>
        <label>RAN</label>
    </interactant>
    <organismsDiffer>false</organismsDiffer>
    <experiments>3</experiments>
</comment>
<comment type="interaction">
    <interactant intactId="EBI-1237307">
        <id>Q9BQA1</id>
    </interactant>
    <interactant intactId="EBI-396669">
        <id>Q9Y3C5</id>
        <label>RNF11</label>
    </interactant>
    <organismsDiffer>false</organismsDiffer>
    <experiments>3</experiments>
</comment>
<comment type="interaction">
    <interactant intactId="EBI-1237307">
        <id>Q9BQA1</id>
    </interactant>
    <interactant intactId="EBI-720609">
        <id>O76024</id>
        <label>WFS1</label>
    </interactant>
    <organismsDiffer>false</organismsDiffer>
    <experiments>3</experiments>
</comment>
<comment type="interaction">
    <interactant intactId="EBI-1237307">
        <id>Q9BQA1</id>
    </interactant>
    <interactant intactId="EBI-6930799">
        <id>P03418</id>
        <label>N</label>
    </interactant>
    <organismsDiffer>true</organismsDiffer>
    <experiments>3</experiments>
</comment>
<comment type="subcellular location">
    <subcellularLocation>
        <location evidence="7 10">Nucleus</location>
    </subcellularLocation>
    <subcellularLocation>
        <location evidence="7 10 13">Cytoplasm</location>
    </subcellularLocation>
    <text evidence="7">Nuclear in Leydig cells and cytoplasmic in germ cells during fetal testicular development. In adult testis, predominantly nuclear. Subcellular location varies from nuclear to cytoplasmic in various tumors (PubMed:17437848).</text>
</comment>
<comment type="alternative products">
    <event type="alternative splicing"/>
    <isoform>
        <id>Q9BQA1-1</id>
        <name>1</name>
        <sequence type="displayed"/>
    </isoform>
    <isoform>
        <id>Q9BQA1-2</id>
        <name>2</name>
        <sequence type="described" ref="VSP_056166"/>
    </isoform>
</comment>
<comment type="tissue specificity">
    <text evidence="4 7">Highly expressed in heart, skeletal muscle, spleen, testis, uterus, prostate and thymus. In testis, expressed in germ cells and Leydig cells, but not in peritubular myocytes, nor in Sertoli cells. Expressed in prostate cancers, in seminomas and in Leydig cell tumors.</text>
</comment>
<comment type="developmental stage">
    <text evidence="7">Expressed in Leydig cells during fetal testicular development, especially during the second semester. Germ cells expression is detected as early as 10 weeks of gestation.</text>
</comment>
<comment type="online information" name="Atlas of Genetics and Cytogenetics in Oncology and Haematology">
    <link uri="https://atlasgeneticsoncology.org/gene/44142/WDR77"/>
</comment>
<gene>
    <name evidence="21" type="primary">WDR77</name>
    <name evidence="21" type="synonym">MEP50</name>
    <name evidence="19" type="synonym">WD45</name>
    <name type="ORF">HKMT1069</name>
    <name type="ORF">Nbla10071</name>
</gene>